<dbReference type="EMBL" id="BC016898">
    <property type="protein sequence ID" value="AAH16898.1"/>
    <property type="molecule type" value="mRNA"/>
</dbReference>
<dbReference type="EMBL" id="BC062097">
    <property type="protein sequence ID" value="AAH62097.1"/>
    <property type="molecule type" value="mRNA"/>
</dbReference>
<dbReference type="CCDS" id="CCDS38569.1"/>
<dbReference type="RefSeq" id="NP_659150.1">
    <property type="nucleotide sequence ID" value="NM_144901.4"/>
</dbReference>
<dbReference type="RefSeq" id="XP_017175039.1">
    <property type="nucleotide sequence ID" value="XM_017319550.1"/>
</dbReference>
<dbReference type="SMR" id="Q91W50"/>
<dbReference type="BioGRID" id="230878">
    <property type="interactions" value="42"/>
</dbReference>
<dbReference type="ComplexPortal" id="CPX-1078">
    <property type="entry name" value="mCRD-poly(A)-bridging complex"/>
</dbReference>
<dbReference type="FunCoup" id="Q91W50">
    <property type="interactions" value="3144"/>
</dbReference>
<dbReference type="IntAct" id="Q91W50">
    <property type="interactions" value="13"/>
</dbReference>
<dbReference type="MINT" id="Q91W50"/>
<dbReference type="STRING" id="10090.ENSMUSP00000029446"/>
<dbReference type="GlyGen" id="Q91W50">
    <property type="glycosylation" value="3 sites, 2 N-linked glycans (2 sites), 1 O-linked glycan (1 site)"/>
</dbReference>
<dbReference type="iPTMnet" id="Q91W50"/>
<dbReference type="PhosphoSitePlus" id="Q91W50"/>
<dbReference type="SwissPalm" id="Q91W50"/>
<dbReference type="jPOST" id="Q91W50"/>
<dbReference type="PaxDb" id="10090-ENSMUSP00000029446"/>
<dbReference type="ProteomicsDB" id="277902"/>
<dbReference type="Pumba" id="Q91W50"/>
<dbReference type="Antibodypedia" id="20164">
    <property type="antibodies" value="218 antibodies from 29 providers"/>
</dbReference>
<dbReference type="DNASU" id="229663"/>
<dbReference type="Ensembl" id="ENSMUST00000029446.13">
    <property type="protein sequence ID" value="ENSMUSP00000029446.9"/>
    <property type="gene ID" value="ENSMUSG00000068823.11"/>
</dbReference>
<dbReference type="Ensembl" id="ENSMUST00000197827.5">
    <property type="protein sequence ID" value="ENSMUSP00000143503.2"/>
    <property type="gene ID" value="ENSMUSG00000068823.11"/>
</dbReference>
<dbReference type="GeneID" id="229663"/>
<dbReference type="KEGG" id="mmu:229663"/>
<dbReference type="UCSC" id="uc008qsg.2">
    <property type="organism name" value="mouse"/>
</dbReference>
<dbReference type="AGR" id="MGI:92356"/>
<dbReference type="CTD" id="7812"/>
<dbReference type="MGI" id="MGI:92356">
    <property type="gene designation" value="Csde1"/>
</dbReference>
<dbReference type="VEuPathDB" id="HostDB:ENSMUSG00000068823"/>
<dbReference type="eggNOG" id="ENOG502QSJ1">
    <property type="taxonomic scope" value="Eukaryota"/>
</dbReference>
<dbReference type="GeneTree" id="ENSGT00390000016950"/>
<dbReference type="InParanoid" id="Q91W50"/>
<dbReference type="OMA" id="NLGACHV"/>
<dbReference type="OrthoDB" id="74319at2759"/>
<dbReference type="PhylomeDB" id="Q91W50"/>
<dbReference type="TreeFam" id="TF324707"/>
<dbReference type="BioGRID-ORCS" id="229663">
    <property type="hits" value="9 hits in 80 CRISPR screens"/>
</dbReference>
<dbReference type="ChiTaRS" id="Csde1">
    <property type="organism name" value="mouse"/>
</dbReference>
<dbReference type="PRO" id="PR:Q91W50"/>
<dbReference type="Proteomes" id="UP000000589">
    <property type="component" value="Chromosome 3"/>
</dbReference>
<dbReference type="RNAct" id="Q91W50">
    <property type="molecule type" value="protein"/>
</dbReference>
<dbReference type="Bgee" id="ENSMUSG00000068823">
    <property type="expression patterns" value="Expressed in rostral migratory stream and 264 other cell types or tissues"/>
</dbReference>
<dbReference type="ExpressionAtlas" id="Q91W50">
    <property type="expression patterns" value="baseline and differential"/>
</dbReference>
<dbReference type="GO" id="GO:0070937">
    <property type="term" value="C:CRD-mediated mRNA stability complex"/>
    <property type="evidence" value="ECO:0007669"/>
    <property type="project" value="Ensembl"/>
</dbReference>
<dbReference type="GO" id="GO:0010494">
    <property type="term" value="C:cytoplasmic stress granule"/>
    <property type="evidence" value="ECO:0007669"/>
    <property type="project" value="UniProtKB-SubCell"/>
</dbReference>
<dbReference type="GO" id="GO:0005829">
    <property type="term" value="C:cytosol"/>
    <property type="evidence" value="ECO:0000266"/>
    <property type="project" value="ComplexPortal"/>
</dbReference>
<dbReference type="GO" id="GO:0005794">
    <property type="term" value="C:Golgi apparatus"/>
    <property type="evidence" value="ECO:0007669"/>
    <property type="project" value="Ensembl"/>
</dbReference>
<dbReference type="GO" id="GO:0106002">
    <property type="term" value="C:mCRD-mediated mRNA stability complex"/>
    <property type="evidence" value="ECO:0000266"/>
    <property type="project" value="ComplexPortal"/>
</dbReference>
<dbReference type="GO" id="GO:0005743">
    <property type="term" value="C:mitochondrial inner membrane"/>
    <property type="evidence" value="ECO:0007005"/>
    <property type="project" value="MGI"/>
</dbReference>
<dbReference type="GO" id="GO:0000932">
    <property type="term" value="C:P-body"/>
    <property type="evidence" value="ECO:0007669"/>
    <property type="project" value="UniProtKB-SubCell"/>
</dbReference>
<dbReference type="GO" id="GO:0005886">
    <property type="term" value="C:plasma membrane"/>
    <property type="evidence" value="ECO:0007669"/>
    <property type="project" value="Ensembl"/>
</dbReference>
<dbReference type="GO" id="GO:0106222">
    <property type="term" value="F:lncRNA binding"/>
    <property type="evidence" value="ECO:0007669"/>
    <property type="project" value="Ensembl"/>
</dbReference>
<dbReference type="GO" id="GO:1905172">
    <property type="term" value="F:RISC complex binding"/>
    <property type="evidence" value="ECO:0000314"/>
    <property type="project" value="FlyBase"/>
</dbReference>
<dbReference type="GO" id="GO:0035613">
    <property type="term" value="F:RNA stem-loop binding"/>
    <property type="evidence" value="ECO:0007669"/>
    <property type="project" value="Ensembl"/>
</dbReference>
<dbReference type="GO" id="GO:0070934">
    <property type="term" value="P:CRD-mediated mRNA stabilization"/>
    <property type="evidence" value="ECO:0000266"/>
    <property type="project" value="ComplexPortal"/>
</dbReference>
<dbReference type="GO" id="GO:0075522">
    <property type="term" value="P:IRES-dependent viral translational initiation"/>
    <property type="evidence" value="ECO:0007669"/>
    <property type="project" value="Ensembl"/>
</dbReference>
<dbReference type="GO" id="GO:1900152">
    <property type="term" value="P:negative regulation of nuclear-transcribed mRNA catabolic process, deadenylation-dependent decay"/>
    <property type="evidence" value="ECO:0000266"/>
    <property type="project" value="ComplexPortal"/>
</dbReference>
<dbReference type="GO" id="GO:0070966">
    <property type="term" value="P:nuclear-transcribed mRNA catabolic process, no-go decay"/>
    <property type="evidence" value="ECO:0007669"/>
    <property type="project" value="Ensembl"/>
</dbReference>
<dbReference type="GO" id="GO:2000767">
    <property type="term" value="P:positive regulation of cytoplasmic translation"/>
    <property type="evidence" value="ECO:0000266"/>
    <property type="project" value="ComplexPortal"/>
</dbReference>
<dbReference type="GO" id="GO:0034063">
    <property type="term" value="P:stress granule assembly"/>
    <property type="evidence" value="ECO:0000250"/>
    <property type="project" value="UniProtKB"/>
</dbReference>
<dbReference type="CDD" id="cd04458">
    <property type="entry name" value="CSP_CDS"/>
    <property type="match status" value="2"/>
</dbReference>
<dbReference type="FunFam" id="2.40.50.140:FF:000055">
    <property type="entry name" value="Cold shock domain containing E1, RNA-binding"/>
    <property type="match status" value="1"/>
</dbReference>
<dbReference type="FunFam" id="2.40.50.140:FF:000088">
    <property type="entry name" value="cold shock domain-containing protein E1 isoform X1"/>
    <property type="match status" value="1"/>
</dbReference>
<dbReference type="FunFam" id="2.40.50.140:FF:000093">
    <property type="entry name" value="cold shock domain-containing protein E1 isoform X1"/>
    <property type="match status" value="1"/>
</dbReference>
<dbReference type="FunFam" id="2.40.50.140:FF:000094">
    <property type="entry name" value="cold shock domain-containing protein E1 isoform X1"/>
    <property type="match status" value="1"/>
</dbReference>
<dbReference type="FunFam" id="2.40.50.140:FF:000133">
    <property type="entry name" value="cold shock domain-containing protein E1 isoform X1"/>
    <property type="match status" value="1"/>
</dbReference>
<dbReference type="Gene3D" id="2.40.50.140">
    <property type="entry name" value="Nucleic acid-binding proteins"/>
    <property type="match status" value="6"/>
</dbReference>
<dbReference type="InterPro" id="IPR011129">
    <property type="entry name" value="CSD"/>
</dbReference>
<dbReference type="InterPro" id="IPR019844">
    <property type="entry name" value="CSD_CS"/>
</dbReference>
<dbReference type="InterPro" id="IPR056400">
    <property type="entry name" value="CSDE1"/>
</dbReference>
<dbReference type="InterPro" id="IPR002059">
    <property type="entry name" value="CSP_DNA-bd"/>
</dbReference>
<dbReference type="InterPro" id="IPR012340">
    <property type="entry name" value="NA-bd_OB-fold"/>
</dbReference>
<dbReference type="InterPro" id="IPR024642">
    <property type="entry name" value="SUZ-C"/>
</dbReference>
<dbReference type="PANTHER" id="PTHR12913:SF1">
    <property type="entry name" value="COLD SHOCK DOMAIN-CONTAINING PROTEIN E1"/>
    <property type="match status" value="1"/>
</dbReference>
<dbReference type="PANTHER" id="PTHR12913">
    <property type="entry name" value="UNR PROTEIN N-RAS UPSTREAM GENE PROTEIN"/>
    <property type="match status" value="1"/>
</dbReference>
<dbReference type="Pfam" id="PF00313">
    <property type="entry name" value="CSD"/>
    <property type="match status" value="5"/>
</dbReference>
<dbReference type="Pfam" id="PF23456">
    <property type="entry name" value="CSDE1"/>
    <property type="match status" value="4"/>
</dbReference>
<dbReference type="Pfam" id="PF12901">
    <property type="entry name" value="SUZ-C"/>
    <property type="match status" value="1"/>
</dbReference>
<dbReference type="SMART" id="SM00357">
    <property type="entry name" value="CSP"/>
    <property type="match status" value="5"/>
</dbReference>
<dbReference type="SUPFAM" id="SSF50249">
    <property type="entry name" value="Nucleic acid-binding proteins"/>
    <property type="match status" value="5"/>
</dbReference>
<dbReference type="PROSITE" id="PS00352">
    <property type="entry name" value="CSD_1"/>
    <property type="match status" value="4"/>
</dbReference>
<dbReference type="PROSITE" id="PS51857">
    <property type="entry name" value="CSD_2"/>
    <property type="match status" value="9"/>
</dbReference>
<dbReference type="PROSITE" id="PS51938">
    <property type="entry name" value="SUZ_C"/>
    <property type="match status" value="1"/>
</dbReference>
<gene>
    <name evidence="4" type="primary">Csde1</name>
    <name type="synonym">D3Jfr1</name>
</gene>
<protein>
    <recommendedName>
        <fullName evidence="3">Cold shock domain-containing protein E1</fullName>
    </recommendedName>
</protein>
<accession>Q91W50</accession>
<organism>
    <name type="scientific">Mus musculus</name>
    <name type="common">Mouse</name>
    <dbReference type="NCBI Taxonomy" id="10090"/>
    <lineage>
        <taxon>Eukaryota</taxon>
        <taxon>Metazoa</taxon>
        <taxon>Chordata</taxon>
        <taxon>Craniata</taxon>
        <taxon>Vertebrata</taxon>
        <taxon>Euteleostomi</taxon>
        <taxon>Mammalia</taxon>
        <taxon>Eutheria</taxon>
        <taxon>Euarchontoglires</taxon>
        <taxon>Glires</taxon>
        <taxon>Rodentia</taxon>
        <taxon>Myomorpha</taxon>
        <taxon>Muroidea</taxon>
        <taxon>Muridae</taxon>
        <taxon>Murinae</taxon>
        <taxon>Mus</taxon>
        <taxon>Mus</taxon>
    </lineage>
</organism>
<evidence type="ECO:0000250" key="1">
    <source>
        <dbReference type="UniProtKB" id="O75534"/>
    </source>
</evidence>
<evidence type="ECO:0000255" key="2">
    <source>
        <dbReference type="PROSITE-ProRule" id="PRU01287"/>
    </source>
</evidence>
<evidence type="ECO:0000305" key="3"/>
<evidence type="ECO:0000312" key="4">
    <source>
        <dbReference type="MGI" id="MGI:92356"/>
    </source>
</evidence>
<comment type="function">
    <text evidence="1">RNA-binding protein involved in translationally coupled mRNA turnover. Implicated with other RNA-binding proteins in the cytoplasmic deadenylation/translational and decay interplay of the FOS mRNA mediated by the major coding-region determinant of instability (mCRD) domain. Required for efficient formation of stress granules.</text>
</comment>
<comment type="subunit">
    <text evidence="1">Component of a multi subunit autoregulatory ribonucleoprotein complex (ARC), at least composed of IGF2BP1, PABPC1 and CSDE1. Interacts with STRAP. Part of a complex associated with the FOS mCRD domain and consisting of PABPC1, PAIP1, HNRPD and SYNCRIP. The interaction with PABPC1 is direct and RNA-independent. Interacts with EIF4ENIF1/4E-T.</text>
</comment>
<comment type="subcellular location">
    <subcellularLocation>
        <location evidence="1">Cytoplasm</location>
    </subcellularLocation>
    <subcellularLocation>
        <location evidence="1">Cytoplasm</location>
        <location evidence="1">Stress granule</location>
    </subcellularLocation>
    <subcellularLocation>
        <location evidence="1">Cytoplasm</location>
        <location evidence="1">P-body</location>
    </subcellularLocation>
</comment>
<comment type="similarity">
    <text evidence="3">Belongs to the UNR family.</text>
</comment>
<proteinExistence type="evidence at protein level"/>
<name>CSDE1_MOUSE</name>
<sequence length="798" mass="88791">MSFDPNLLHNNGHNGYPNGTSAALRETGVIEKLLTSYGFIQCSERQARLFFHCSQYNGNLQDLKVGDDVEFEVSSDRRTGKPIAIKLVKIKPEIHPEERMNGQVVCAVPHNLESKSPAAPGQSPTGSVCYERNGEVFYLTYTSEDVEGNVQLETGDKINFVIDNNKHTGAVSARNIMLLKKKQARCQGVVCAMKEAFGFIERGDVVKEIFFHYSEFKGDLETLQPGDDVEFTIKDRNGKEVATDVRLLPQGTVIFEDISIEHFEGTVTKVIPKVPSKNQNDPLPGRIKVDFVIPKELPFGDKDTKSKVTLLEGDHVRFNISTDRRDKLERATNIEVLSNTFQFTNEAREMGVIAAMRDGFGFIKCVDRDARMFFHFSEILDGNQLHIADEVEFTVVPDMLSAQRNHAIRIKKLPKGTVSFHSHSDHRFLGTVEKEATFSNPKTTSPNKGKDKEAEDGIIAYDDCGVKLTIAFQAKDVEGSTSPQIGDKVEFSISDKQRPGQQIATCVRLLGRNSNSKRLLGYVATLKDNFGFIETANHDKEIFFHYSEFSGDVDSLELGDMVEYSLSKGKGNKVSAEKVNKAHSVNGITEEANPTIYSGKVIRPLRGVDPTQIEYQGMIEIVEEGDMKGEVYPFGIVGMANKGDCLQKGESVKFQLCVLGQNAQTMAYNITPLRRATVECVKDQFGFINYEVGDSKKLFFHVKEVQDGVELQAGDEVEFSVILNQRTGKCSACNVWRVCEGPKAVAAPRPDRLVNRLKNITLDDASAPRLMVLRQPRGPDNSMGFGAERKIRQAGVID</sequence>
<keyword id="KW-0007">Acetylation</keyword>
<keyword id="KW-0963">Cytoplasm</keyword>
<keyword id="KW-1017">Isopeptide bond</keyword>
<keyword id="KW-0597">Phosphoprotein</keyword>
<keyword id="KW-1185">Reference proteome</keyword>
<keyword id="KW-0677">Repeat</keyword>
<keyword id="KW-0694">RNA-binding</keyword>
<keyword id="KW-0832">Ubl conjugation</keyword>
<feature type="chain" id="PRO_0000100349" description="Cold shock domain-containing protein E1">
    <location>
        <begin position="1"/>
        <end position="798"/>
    </location>
</feature>
<feature type="domain" description="CSD 1">
    <location>
        <begin position="26"/>
        <end position="87"/>
    </location>
</feature>
<feature type="domain" description="CSD 2; truncated">
    <location>
        <begin position="136"/>
        <end position="179"/>
    </location>
</feature>
<feature type="domain" description="CSD 3">
    <location>
        <begin position="186"/>
        <end position="245"/>
    </location>
</feature>
<feature type="domain" description="CSD 4; truncated">
    <location>
        <begin position="297"/>
        <end position="337"/>
    </location>
</feature>
<feature type="domain" description="CSD 5">
    <location>
        <begin position="349"/>
        <end position="410"/>
    </location>
</feature>
<feature type="domain" description="CSD 6">
    <location>
        <begin position="447"/>
        <end position="507"/>
    </location>
</feature>
<feature type="domain" description="CSD 7">
    <location>
        <begin position="519"/>
        <end position="579"/>
    </location>
</feature>
<feature type="domain" description="CSD 8">
    <location>
        <begin position="610"/>
        <end position="670"/>
    </location>
</feature>
<feature type="domain" description="CSD 9">
    <location>
        <begin position="674"/>
        <end position="735"/>
    </location>
</feature>
<feature type="domain" description="SUZ-C" evidence="2">
    <location>
        <begin position="748"/>
        <end position="789"/>
    </location>
</feature>
<feature type="modified residue" description="N6-acetyllysine" evidence="1">
    <location>
        <position position="81"/>
    </location>
</feature>
<feature type="modified residue" description="Phosphoserine" evidence="1">
    <location>
        <position position="123"/>
    </location>
</feature>
<feature type="modified residue" description="Phosphoserine" evidence="1">
    <location>
        <position position="276"/>
    </location>
</feature>
<feature type="modified residue" description="Phosphoserine" evidence="1">
    <location>
        <position position="514"/>
    </location>
</feature>
<feature type="modified residue" description="Phosphoserine" evidence="1">
    <location>
        <position position="584"/>
    </location>
</feature>
<feature type="modified residue" description="Phosphothreonine" evidence="1">
    <location>
        <position position="761"/>
    </location>
</feature>
<feature type="cross-link" description="Glycyl lysine isopeptide (Lys-Gly) (interchain with G-Cter in SUMO2)" evidence="1">
    <location>
        <position position="91"/>
    </location>
</feature>
<reference key="1">
    <citation type="journal article" date="2004" name="Genome Res.">
        <title>The status, quality, and expansion of the NIH full-length cDNA project: the Mammalian Gene Collection (MGC).</title>
        <authorList>
            <consortium name="The MGC Project Team"/>
        </authorList>
    </citation>
    <scope>NUCLEOTIDE SEQUENCE [LARGE SCALE MRNA]</scope>
    <source>
        <strain>C57BL/6J</strain>
        <strain>FVB/N</strain>
        <tissue>Brain</tissue>
        <tissue>Colon</tissue>
    </source>
</reference>
<reference key="2">
    <citation type="journal article" date="2010" name="Cell">
        <title>A tissue-specific atlas of mouse protein phosphorylation and expression.</title>
        <authorList>
            <person name="Huttlin E.L."/>
            <person name="Jedrychowski M.P."/>
            <person name="Elias J.E."/>
            <person name="Goswami T."/>
            <person name="Rad R."/>
            <person name="Beausoleil S.A."/>
            <person name="Villen J."/>
            <person name="Haas W."/>
            <person name="Sowa M.E."/>
            <person name="Gygi S.P."/>
        </authorList>
    </citation>
    <scope>IDENTIFICATION BY MASS SPECTROMETRY [LARGE SCALE ANALYSIS]</scope>
    <source>
        <tissue>Brain</tissue>
        <tissue>Brown adipose tissue</tissue>
        <tissue>Heart</tissue>
        <tissue>Kidney</tissue>
        <tissue>Liver</tissue>
        <tissue>Lung</tissue>
        <tissue>Pancreas</tissue>
        <tissue>Spleen</tissue>
        <tissue>Testis</tissue>
    </source>
</reference>